<organism>
    <name type="scientific">Pseudomonas fluorescens (strain ATCC BAA-477 / NRRL B-23932 / Pf-5)</name>
    <dbReference type="NCBI Taxonomy" id="220664"/>
    <lineage>
        <taxon>Bacteria</taxon>
        <taxon>Pseudomonadati</taxon>
        <taxon>Pseudomonadota</taxon>
        <taxon>Gammaproteobacteria</taxon>
        <taxon>Pseudomonadales</taxon>
        <taxon>Pseudomonadaceae</taxon>
        <taxon>Pseudomonas</taxon>
    </lineage>
</organism>
<name>ISPH_PSEF5</name>
<gene>
    <name evidence="1" type="primary">ispH</name>
    <name type="ordered locus">PFL_5318</name>
</gene>
<accession>Q4K5U7</accession>
<protein>
    <recommendedName>
        <fullName evidence="1">4-hydroxy-3-methylbut-2-enyl diphosphate reductase</fullName>
        <shortName evidence="1">HMBPP reductase</shortName>
        <ecNumber evidence="1">1.17.7.4</ecNumber>
    </recommendedName>
</protein>
<keyword id="KW-0004">4Fe-4S</keyword>
<keyword id="KW-0408">Iron</keyword>
<keyword id="KW-0411">Iron-sulfur</keyword>
<keyword id="KW-0414">Isoprene biosynthesis</keyword>
<keyword id="KW-0479">Metal-binding</keyword>
<keyword id="KW-0560">Oxidoreductase</keyword>
<dbReference type="EC" id="1.17.7.4" evidence="1"/>
<dbReference type="EMBL" id="CP000076">
    <property type="protein sequence ID" value="AAY94528.1"/>
    <property type="molecule type" value="Genomic_DNA"/>
</dbReference>
<dbReference type="RefSeq" id="WP_011063546.1">
    <property type="nucleotide sequence ID" value="NC_004129.6"/>
</dbReference>
<dbReference type="SMR" id="Q4K5U7"/>
<dbReference type="STRING" id="220664.PFL_5318"/>
<dbReference type="GeneID" id="57478287"/>
<dbReference type="KEGG" id="pfl:PFL_5318"/>
<dbReference type="PATRIC" id="fig|220664.5.peg.5428"/>
<dbReference type="eggNOG" id="COG0761">
    <property type="taxonomic scope" value="Bacteria"/>
</dbReference>
<dbReference type="HOGENOM" id="CLU_027486_1_0_6"/>
<dbReference type="UniPathway" id="UPA00056">
    <property type="reaction ID" value="UER00097"/>
</dbReference>
<dbReference type="UniPathway" id="UPA00059">
    <property type="reaction ID" value="UER00105"/>
</dbReference>
<dbReference type="Proteomes" id="UP000008540">
    <property type="component" value="Chromosome"/>
</dbReference>
<dbReference type="GO" id="GO:0051539">
    <property type="term" value="F:4 iron, 4 sulfur cluster binding"/>
    <property type="evidence" value="ECO:0007669"/>
    <property type="project" value="UniProtKB-UniRule"/>
</dbReference>
<dbReference type="GO" id="GO:0051745">
    <property type="term" value="F:4-hydroxy-3-methylbut-2-enyl diphosphate reductase activity"/>
    <property type="evidence" value="ECO:0007669"/>
    <property type="project" value="UniProtKB-UniRule"/>
</dbReference>
<dbReference type="GO" id="GO:0046872">
    <property type="term" value="F:metal ion binding"/>
    <property type="evidence" value="ECO:0007669"/>
    <property type="project" value="UniProtKB-KW"/>
</dbReference>
<dbReference type="GO" id="GO:0050992">
    <property type="term" value="P:dimethylallyl diphosphate biosynthetic process"/>
    <property type="evidence" value="ECO:0007669"/>
    <property type="project" value="UniProtKB-UniRule"/>
</dbReference>
<dbReference type="GO" id="GO:0019288">
    <property type="term" value="P:isopentenyl diphosphate biosynthetic process, methylerythritol 4-phosphate pathway"/>
    <property type="evidence" value="ECO:0007669"/>
    <property type="project" value="UniProtKB-UniRule"/>
</dbReference>
<dbReference type="GO" id="GO:0016114">
    <property type="term" value="P:terpenoid biosynthetic process"/>
    <property type="evidence" value="ECO:0007669"/>
    <property type="project" value="UniProtKB-UniRule"/>
</dbReference>
<dbReference type="CDD" id="cd13944">
    <property type="entry name" value="lytB_ispH"/>
    <property type="match status" value="1"/>
</dbReference>
<dbReference type="Gene3D" id="3.40.50.11270">
    <property type="match status" value="1"/>
</dbReference>
<dbReference type="Gene3D" id="3.40.1010.20">
    <property type="entry name" value="4-hydroxy-3-methylbut-2-enyl diphosphate reductase, catalytic domain"/>
    <property type="match status" value="2"/>
</dbReference>
<dbReference type="HAMAP" id="MF_00191">
    <property type="entry name" value="IspH"/>
    <property type="match status" value="1"/>
</dbReference>
<dbReference type="InterPro" id="IPR003451">
    <property type="entry name" value="LytB/IspH"/>
</dbReference>
<dbReference type="NCBIfam" id="TIGR00216">
    <property type="entry name" value="ispH_lytB"/>
    <property type="match status" value="1"/>
</dbReference>
<dbReference type="NCBIfam" id="NF002188">
    <property type="entry name" value="PRK01045.1-2"/>
    <property type="match status" value="1"/>
</dbReference>
<dbReference type="NCBIfam" id="NF002190">
    <property type="entry name" value="PRK01045.1-4"/>
    <property type="match status" value="1"/>
</dbReference>
<dbReference type="PANTHER" id="PTHR30426">
    <property type="entry name" value="4-HYDROXY-3-METHYLBUT-2-ENYL DIPHOSPHATE REDUCTASE"/>
    <property type="match status" value="1"/>
</dbReference>
<dbReference type="PANTHER" id="PTHR30426:SF0">
    <property type="entry name" value="4-HYDROXY-3-METHYLBUT-2-ENYL DIPHOSPHATE REDUCTASE"/>
    <property type="match status" value="1"/>
</dbReference>
<dbReference type="Pfam" id="PF02401">
    <property type="entry name" value="LYTB"/>
    <property type="match status" value="1"/>
</dbReference>
<reference key="1">
    <citation type="journal article" date="2005" name="Nat. Biotechnol.">
        <title>Complete genome sequence of the plant commensal Pseudomonas fluorescens Pf-5.</title>
        <authorList>
            <person name="Paulsen I.T."/>
            <person name="Press C.M."/>
            <person name="Ravel J."/>
            <person name="Kobayashi D.Y."/>
            <person name="Myers G.S.A."/>
            <person name="Mavrodi D.V."/>
            <person name="DeBoy R.T."/>
            <person name="Seshadri R."/>
            <person name="Ren Q."/>
            <person name="Madupu R."/>
            <person name="Dodson R.J."/>
            <person name="Durkin A.S."/>
            <person name="Brinkac L.M."/>
            <person name="Daugherty S.C."/>
            <person name="Sullivan S.A."/>
            <person name="Rosovitz M.J."/>
            <person name="Gwinn M.L."/>
            <person name="Zhou L."/>
            <person name="Schneider D.J."/>
            <person name="Cartinhour S.W."/>
            <person name="Nelson W.C."/>
            <person name="Weidman J."/>
            <person name="Watkins K."/>
            <person name="Tran K."/>
            <person name="Khouri H."/>
            <person name="Pierson E.A."/>
            <person name="Pierson L.S. III"/>
            <person name="Thomashow L.S."/>
            <person name="Loper J.E."/>
        </authorList>
    </citation>
    <scope>NUCLEOTIDE SEQUENCE [LARGE SCALE GENOMIC DNA]</scope>
    <source>
        <strain>ATCC BAA-477 / NRRL B-23932 / Pf-5</strain>
    </source>
</reference>
<feature type="chain" id="PRO_1000021161" description="4-hydroxy-3-methylbut-2-enyl diphosphate reductase">
    <location>
        <begin position="1"/>
        <end position="315"/>
    </location>
</feature>
<feature type="active site" description="Proton donor" evidence="1">
    <location>
        <position position="126"/>
    </location>
</feature>
<feature type="binding site" evidence="1">
    <location>
        <position position="12"/>
    </location>
    <ligand>
        <name>[4Fe-4S] cluster</name>
        <dbReference type="ChEBI" id="CHEBI:49883"/>
    </ligand>
</feature>
<feature type="binding site" evidence="1">
    <location>
        <position position="41"/>
    </location>
    <ligand>
        <name>(2E)-4-hydroxy-3-methylbut-2-enyl diphosphate</name>
        <dbReference type="ChEBI" id="CHEBI:128753"/>
    </ligand>
</feature>
<feature type="binding site" evidence="1">
    <location>
        <position position="41"/>
    </location>
    <ligand>
        <name>dimethylallyl diphosphate</name>
        <dbReference type="ChEBI" id="CHEBI:57623"/>
    </ligand>
</feature>
<feature type="binding site" evidence="1">
    <location>
        <position position="41"/>
    </location>
    <ligand>
        <name>isopentenyl diphosphate</name>
        <dbReference type="ChEBI" id="CHEBI:128769"/>
    </ligand>
</feature>
<feature type="binding site" evidence="1">
    <location>
        <position position="74"/>
    </location>
    <ligand>
        <name>(2E)-4-hydroxy-3-methylbut-2-enyl diphosphate</name>
        <dbReference type="ChEBI" id="CHEBI:128753"/>
    </ligand>
</feature>
<feature type="binding site" evidence="1">
    <location>
        <position position="74"/>
    </location>
    <ligand>
        <name>dimethylallyl diphosphate</name>
        <dbReference type="ChEBI" id="CHEBI:57623"/>
    </ligand>
</feature>
<feature type="binding site" evidence="1">
    <location>
        <position position="74"/>
    </location>
    <ligand>
        <name>isopentenyl diphosphate</name>
        <dbReference type="ChEBI" id="CHEBI:128769"/>
    </ligand>
</feature>
<feature type="binding site" evidence="1">
    <location>
        <position position="96"/>
    </location>
    <ligand>
        <name>[4Fe-4S] cluster</name>
        <dbReference type="ChEBI" id="CHEBI:49883"/>
    </ligand>
</feature>
<feature type="binding site" evidence="1">
    <location>
        <position position="124"/>
    </location>
    <ligand>
        <name>(2E)-4-hydroxy-3-methylbut-2-enyl diphosphate</name>
        <dbReference type="ChEBI" id="CHEBI:128753"/>
    </ligand>
</feature>
<feature type="binding site" evidence="1">
    <location>
        <position position="124"/>
    </location>
    <ligand>
        <name>dimethylallyl diphosphate</name>
        <dbReference type="ChEBI" id="CHEBI:57623"/>
    </ligand>
</feature>
<feature type="binding site" evidence="1">
    <location>
        <position position="124"/>
    </location>
    <ligand>
        <name>isopentenyl diphosphate</name>
        <dbReference type="ChEBI" id="CHEBI:128769"/>
    </ligand>
</feature>
<feature type="binding site" evidence="1">
    <location>
        <position position="168"/>
    </location>
    <ligand>
        <name>(2E)-4-hydroxy-3-methylbut-2-enyl diphosphate</name>
        <dbReference type="ChEBI" id="CHEBI:128753"/>
    </ligand>
</feature>
<feature type="binding site" evidence="1">
    <location>
        <position position="198"/>
    </location>
    <ligand>
        <name>[4Fe-4S] cluster</name>
        <dbReference type="ChEBI" id="CHEBI:49883"/>
    </ligand>
</feature>
<feature type="binding site" evidence="1">
    <location>
        <position position="226"/>
    </location>
    <ligand>
        <name>(2E)-4-hydroxy-3-methylbut-2-enyl diphosphate</name>
        <dbReference type="ChEBI" id="CHEBI:128753"/>
    </ligand>
</feature>
<feature type="binding site" evidence="1">
    <location>
        <position position="226"/>
    </location>
    <ligand>
        <name>dimethylallyl diphosphate</name>
        <dbReference type="ChEBI" id="CHEBI:57623"/>
    </ligand>
</feature>
<feature type="binding site" evidence="1">
    <location>
        <position position="226"/>
    </location>
    <ligand>
        <name>isopentenyl diphosphate</name>
        <dbReference type="ChEBI" id="CHEBI:128769"/>
    </ligand>
</feature>
<feature type="binding site" evidence="1">
    <location>
        <position position="227"/>
    </location>
    <ligand>
        <name>(2E)-4-hydroxy-3-methylbut-2-enyl diphosphate</name>
        <dbReference type="ChEBI" id="CHEBI:128753"/>
    </ligand>
</feature>
<feature type="binding site" evidence="1">
    <location>
        <position position="227"/>
    </location>
    <ligand>
        <name>dimethylallyl diphosphate</name>
        <dbReference type="ChEBI" id="CHEBI:57623"/>
    </ligand>
</feature>
<feature type="binding site" evidence="1">
    <location>
        <position position="227"/>
    </location>
    <ligand>
        <name>isopentenyl diphosphate</name>
        <dbReference type="ChEBI" id="CHEBI:128769"/>
    </ligand>
</feature>
<feature type="binding site" evidence="1">
    <location>
        <position position="228"/>
    </location>
    <ligand>
        <name>(2E)-4-hydroxy-3-methylbut-2-enyl diphosphate</name>
        <dbReference type="ChEBI" id="CHEBI:128753"/>
    </ligand>
</feature>
<feature type="binding site" evidence="1">
    <location>
        <position position="228"/>
    </location>
    <ligand>
        <name>dimethylallyl diphosphate</name>
        <dbReference type="ChEBI" id="CHEBI:57623"/>
    </ligand>
</feature>
<feature type="binding site" evidence="1">
    <location>
        <position position="228"/>
    </location>
    <ligand>
        <name>isopentenyl diphosphate</name>
        <dbReference type="ChEBI" id="CHEBI:128769"/>
    </ligand>
</feature>
<feature type="binding site" evidence="1">
    <location>
        <position position="270"/>
    </location>
    <ligand>
        <name>(2E)-4-hydroxy-3-methylbut-2-enyl diphosphate</name>
        <dbReference type="ChEBI" id="CHEBI:128753"/>
    </ligand>
</feature>
<feature type="binding site" evidence="1">
    <location>
        <position position="270"/>
    </location>
    <ligand>
        <name>dimethylallyl diphosphate</name>
        <dbReference type="ChEBI" id="CHEBI:57623"/>
    </ligand>
</feature>
<feature type="binding site" evidence="1">
    <location>
        <position position="270"/>
    </location>
    <ligand>
        <name>isopentenyl diphosphate</name>
        <dbReference type="ChEBI" id="CHEBI:128769"/>
    </ligand>
</feature>
<comment type="function">
    <text evidence="1">Catalyzes the conversion of 1-hydroxy-2-methyl-2-(E)-butenyl 4-diphosphate (HMBPP) into a mixture of isopentenyl diphosphate (IPP) and dimethylallyl diphosphate (DMAPP). Acts in the terminal step of the DOXP/MEP pathway for isoprenoid precursor biosynthesis.</text>
</comment>
<comment type="catalytic activity">
    <reaction evidence="1">
        <text>isopentenyl diphosphate + 2 oxidized [2Fe-2S]-[ferredoxin] + H2O = (2E)-4-hydroxy-3-methylbut-2-enyl diphosphate + 2 reduced [2Fe-2S]-[ferredoxin] + 2 H(+)</text>
        <dbReference type="Rhea" id="RHEA:24488"/>
        <dbReference type="Rhea" id="RHEA-COMP:10000"/>
        <dbReference type="Rhea" id="RHEA-COMP:10001"/>
        <dbReference type="ChEBI" id="CHEBI:15377"/>
        <dbReference type="ChEBI" id="CHEBI:15378"/>
        <dbReference type="ChEBI" id="CHEBI:33737"/>
        <dbReference type="ChEBI" id="CHEBI:33738"/>
        <dbReference type="ChEBI" id="CHEBI:128753"/>
        <dbReference type="ChEBI" id="CHEBI:128769"/>
        <dbReference type="EC" id="1.17.7.4"/>
    </reaction>
</comment>
<comment type="catalytic activity">
    <reaction evidence="1">
        <text>dimethylallyl diphosphate + 2 oxidized [2Fe-2S]-[ferredoxin] + H2O = (2E)-4-hydroxy-3-methylbut-2-enyl diphosphate + 2 reduced [2Fe-2S]-[ferredoxin] + 2 H(+)</text>
        <dbReference type="Rhea" id="RHEA:24825"/>
        <dbReference type="Rhea" id="RHEA-COMP:10000"/>
        <dbReference type="Rhea" id="RHEA-COMP:10001"/>
        <dbReference type="ChEBI" id="CHEBI:15377"/>
        <dbReference type="ChEBI" id="CHEBI:15378"/>
        <dbReference type="ChEBI" id="CHEBI:33737"/>
        <dbReference type="ChEBI" id="CHEBI:33738"/>
        <dbReference type="ChEBI" id="CHEBI:57623"/>
        <dbReference type="ChEBI" id="CHEBI:128753"/>
        <dbReference type="EC" id="1.17.7.4"/>
    </reaction>
</comment>
<comment type="cofactor">
    <cofactor evidence="1">
        <name>[4Fe-4S] cluster</name>
        <dbReference type="ChEBI" id="CHEBI:49883"/>
    </cofactor>
    <text evidence="1">Binds 1 [4Fe-4S] cluster per subunit.</text>
</comment>
<comment type="pathway">
    <text evidence="1">Isoprenoid biosynthesis; dimethylallyl diphosphate biosynthesis; dimethylallyl diphosphate from (2E)-4-hydroxy-3-methylbutenyl diphosphate: step 1/1.</text>
</comment>
<comment type="pathway">
    <text evidence="1">Isoprenoid biosynthesis; isopentenyl diphosphate biosynthesis via DXP pathway; isopentenyl diphosphate from 1-deoxy-D-xylulose 5-phosphate: step 6/6.</text>
</comment>
<comment type="similarity">
    <text evidence="1">Belongs to the IspH family.</text>
</comment>
<sequence>MQIKLANPRGFCAGVDRAIEIVNRALEVFGPPIYVRHEVVHNKFVVEDLRNRGAIFVEELDQVPDDVIVIFSAHGVSQAVRSEAAGRGLKVFDATCPLVTKVHIEVARYSRDGRECILIGHAGHPEVEGTMGQYDASNGGAIYLVEDEKDVAELQVRNPERLAFVTQTTLSMDDTSRVIDALRTRFPAIGGPRKDDICYATQNRQDAVKQLADECDVVLVVGSPNSSNSNRLRELAERMATPAYLIDGAEDLQRSWFDGVERIGITAGASAPEVLVRGVIQQLQAWGATGADELAGREENITFSMPKELRVRSLL</sequence>
<proteinExistence type="inferred from homology"/>
<evidence type="ECO:0000255" key="1">
    <source>
        <dbReference type="HAMAP-Rule" id="MF_00191"/>
    </source>
</evidence>